<reference key="1">
    <citation type="submission" date="2005-03" db="EMBL/GenBank/DDBJ databases">
        <title>Annotation of the Saccharomyces cerevisiae RM11-1a genome.</title>
        <authorList>
            <consortium name="The Broad Institute Genome Sequencing Platform"/>
            <person name="Birren B.W."/>
            <person name="Lander E.S."/>
            <person name="Galagan J.E."/>
            <person name="Nusbaum C."/>
            <person name="Devon K."/>
            <person name="Cuomo C."/>
            <person name="Jaffe D.B."/>
            <person name="Butler J."/>
            <person name="Alvarez P."/>
            <person name="Gnerre S."/>
            <person name="Grabherr M."/>
            <person name="Kleber M."/>
            <person name="Mauceli E.W."/>
            <person name="Brockman W."/>
            <person name="MacCallum I.A."/>
            <person name="Rounsley S."/>
            <person name="Young S.K."/>
            <person name="LaButti K."/>
            <person name="Pushparaj V."/>
            <person name="DeCaprio D."/>
            <person name="Crawford M."/>
            <person name="Koehrsen M."/>
            <person name="Engels R."/>
            <person name="Montgomery P."/>
            <person name="Pearson M."/>
            <person name="Howarth C."/>
            <person name="Larson L."/>
            <person name="Luoma S."/>
            <person name="White J."/>
            <person name="O'Leary S."/>
            <person name="Kodira C.D."/>
            <person name="Zeng Q."/>
            <person name="Yandava C."/>
            <person name="Alvarado L."/>
            <person name="Pratt S."/>
            <person name="Kruglyak L."/>
        </authorList>
    </citation>
    <scope>NUCLEOTIDE SEQUENCE [LARGE SCALE GENOMIC DNA]</scope>
    <source>
        <strain>RM11-1a</strain>
    </source>
</reference>
<protein>
    <recommendedName>
        <fullName evidence="2">Phosphatidylethanolamine N-methyltransferase</fullName>
        <shortName evidence="2">PE methyltransferase</shortName>
        <shortName evidence="2">PEAMT</shortName>
        <shortName evidence="2">PEMT</shortName>
        <ecNumber evidence="2">2.1.1.17</ecNumber>
    </recommendedName>
</protein>
<organism>
    <name type="scientific">Saccharomyces cerevisiae (strain RM11-1a)</name>
    <name type="common">Baker's yeast</name>
    <dbReference type="NCBI Taxonomy" id="285006"/>
    <lineage>
        <taxon>Eukaryota</taxon>
        <taxon>Fungi</taxon>
        <taxon>Dikarya</taxon>
        <taxon>Ascomycota</taxon>
        <taxon>Saccharomycotina</taxon>
        <taxon>Saccharomycetes</taxon>
        <taxon>Saccharomycetales</taxon>
        <taxon>Saccharomycetaceae</taxon>
        <taxon>Saccharomyces</taxon>
    </lineage>
</organism>
<dbReference type="EC" id="2.1.1.17" evidence="2"/>
<dbReference type="EMBL" id="CH408044">
    <property type="protein sequence ID" value="EDV10094.1"/>
    <property type="molecule type" value="Genomic_DNA"/>
</dbReference>
<dbReference type="HOGENOM" id="CLU_005987_0_1_1"/>
<dbReference type="OrthoDB" id="20536at4893"/>
<dbReference type="UniPathway" id="UPA00753"/>
<dbReference type="Proteomes" id="UP000008335">
    <property type="component" value="Unassembled WGS sequence"/>
</dbReference>
<dbReference type="GO" id="GO:0005789">
    <property type="term" value="C:endoplasmic reticulum membrane"/>
    <property type="evidence" value="ECO:0007669"/>
    <property type="project" value="UniProtKB-SubCell"/>
</dbReference>
<dbReference type="GO" id="GO:0004608">
    <property type="term" value="F:phosphatidylethanolamine N-methyltransferase activity"/>
    <property type="evidence" value="ECO:0007669"/>
    <property type="project" value="UniProtKB-UniRule"/>
</dbReference>
<dbReference type="GO" id="GO:0032259">
    <property type="term" value="P:methylation"/>
    <property type="evidence" value="ECO:0007669"/>
    <property type="project" value="UniProtKB-KW"/>
</dbReference>
<dbReference type="GO" id="GO:0006656">
    <property type="term" value="P:phosphatidylcholine biosynthetic process"/>
    <property type="evidence" value="ECO:0007669"/>
    <property type="project" value="UniProtKB-UniRule"/>
</dbReference>
<dbReference type="FunFam" id="1.20.120.1630:FF:000016">
    <property type="entry name" value="Phosphatidylethanolamine N-methyltransferase"/>
    <property type="match status" value="1"/>
</dbReference>
<dbReference type="Gene3D" id="1.20.120.1630">
    <property type="match status" value="2"/>
</dbReference>
<dbReference type="Gene3D" id="2.60.40.2840">
    <property type="match status" value="1"/>
</dbReference>
<dbReference type="HAMAP" id="MF_03217">
    <property type="entry name" value="PEMT"/>
    <property type="match status" value="1"/>
</dbReference>
<dbReference type="InterPro" id="IPR007318">
    <property type="entry name" value="Phopholipid_MeTrfase"/>
</dbReference>
<dbReference type="InterPro" id="IPR016219">
    <property type="entry name" value="Phosphatid-EA_MeTrfase_fun"/>
</dbReference>
<dbReference type="PANTHER" id="PTHR32138">
    <property type="entry name" value="PHOSPHATIDYLETHANOLAMINE N-METHYLTRANSFERASE"/>
    <property type="match status" value="1"/>
</dbReference>
<dbReference type="PANTHER" id="PTHR32138:SF0">
    <property type="entry name" value="PHOSPHATIDYLETHANOLAMINE N-METHYLTRANSFERASE"/>
    <property type="match status" value="1"/>
</dbReference>
<dbReference type="Pfam" id="PF04191">
    <property type="entry name" value="PEMT"/>
    <property type="match status" value="2"/>
</dbReference>
<dbReference type="PIRSF" id="PIRSF000383">
    <property type="entry name" value="PEAMT"/>
    <property type="match status" value="1"/>
</dbReference>
<dbReference type="PROSITE" id="PS51598">
    <property type="entry name" value="SAM_CHO2"/>
    <property type="match status" value="1"/>
</dbReference>
<evidence type="ECO:0000250" key="1">
    <source>
        <dbReference type="UniProtKB" id="P05374"/>
    </source>
</evidence>
<evidence type="ECO:0000255" key="2">
    <source>
        <dbReference type="HAMAP-Rule" id="MF_03217"/>
    </source>
</evidence>
<keyword id="KW-0007">Acetylation</keyword>
<keyword id="KW-0256">Endoplasmic reticulum</keyword>
<keyword id="KW-0444">Lipid biosynthesis</keyword>
<keyword id="KW-0443">Lipid metabolism</keyword>
<keyword id="KW-0472">Membrane</keyword>
<keyword id="KW-0489">Methyltransferase</keyword>
<keyword id="KW-0594">Phospholipid biosynthesis</keyword>
<keyword id="KW-1208">Phospholipid metabolism</keyword>
<keyword id="KW-0949">S-adenosyl-L-methionine</keyword>
<keyword id="KW-0808">Transferase</keyword>
<keyword id="KW-0812">Transmembrane</keyword>
<keyword id="KW-1133">Transmembrane helix</keyword>
<sequence length="869" mass="101208">MSSCKTTLSEMVGSVTKDRGTINVKARTRSSNVTFKPPVTHDMVRSLFDPTLKKSLLEKCIALAIISNFFICYWVFQRFGLQFTKYFFLVQYLFWRIAYNLGIGLVLHYQSHYETLTNCAKTHAIFSKIPHNKDANSNFSTNSNSFSEKFWNFIRKFCQYEIRSKMPKEYDLFAYPEEINVWLIFRQFVDLILMQDFVTYIIYVYLSIPYSWVQIFNWRSLLGVILILFNIWVKLDAHRVVKDYAWYWGDFFFLEESELVFDGVFNISPHPMYSIGYLGYYGLSLICNDYKVLLVSVFGHYSQFLFLKYVENPHIERTYGDGTDSDSQMNSRIDDLISKENYDYSRPLINMGLSFNNFNKLRFTDYFTIGTVAALMLGAIMNARFINLNYLFITVFVTKLVSWLFISTILYKQSQSKWFTRLFLENGYTQVYSYEQWQFIYNYYLVLTYTLMIIYTGLQIWSNFSNINNSQLIFGLILVALQTWCDKETRLAISDFGWFYGDFFLSNYISTRKLTSQGIYRYLNHPEAVLGVVGVWGTVLMTNFAVTNIILAVLWTLTNFILVKFIETPHVNKIYGKTKRVSGVGKTLLGLKPLRQVSDIVNRIENIIIKSLVDESKNSNGGAELLPKNYQDNKEWNILIQEAMDSVATRLSPYCELKIENEQIETNFVLPTPVTLNWKMPIELYNGDDWIGLYKVIDTRADREKTRVGSGGHWSATSKDSYMNHGLRHKESVTEIKATEKYVQGKVTFDTSLLYFENGIYEFRYHSGNSHKVLLISTPFEISLPVLNTTTPELFEKDLTEFLTKVNVLKDGKFRPLGNKFFGMDSLKQLIKNSIGVELSSEYMRRVNGDAHVISHRAWDIKQTLDSLA</sequence>
<feature type="initiator methionine" description="Removed" evidence="1">
    <location>
        <position position="1"/>
    </location>
</feature>
<feature type="chain" id="PRO_0000405915" description="Phosphatidylethanolamine N-methyltransferase">
    <location>
        <begin position="2"/>
        <end position="869"/>
    </location>
</feature>
<feature type="topological domain" description="Lumenal" evidence="2">
    <location>
        <begin position="2"/>
        <end position="55"/>
    </location>
</feature>
<feature type="transmembrane region" description="Helical" evidence="2">
    <location>
        <begin position="56"/>
        <end position="76"/>
    </location>
</feature>
<feature type="topological domain" description="Cytoplasmic" evidence="2">
    <location>
        <begin position="77"/>
        <end position="86"/>
    </location>
</feature>
<feature type="transmembrane region" description="Helical" evidence="2">
    <location>
        <begin position="87"/>
        <end position="107"/>
    </location>
</feature>
<feature type="topological domain" description="Lumenal" evidence="2">
    <location>
        <begin position="108"/>
        <end position="187"/>
    </location>
</feature>
<feature type="transmembrane region" description="Helical" evidence="2">
    <location>
        <begin position="188"/>
        <end position="208"/>
    </location>
</feature>
<feature type="topological domain" description="Cytoplasmic" evidence="2">
    <location>
        <begin position="209"/>
        <end position="212"/>
    </location>
</feature>
<feature type="transmembrane region" description="Helical" evidence="2">
    <location>
        <begin position="213"/>
        <end position="233"/>
    </location>
</feature>
<feature type="topological domain" description="Lumenal" evidence="2">
    <location>
        <begin position="234"/>
        <end position="244"/>
    </location>
</feature>
<feature type="transmembrane region" description="Helical" evidence="2">
    <location>
        <begin position="245"/>
        <end position="265"/>
    </location>
</feature>
<feature type="topological domain" description="Cytoplasmic" evidence="2">
    <location>
        <position position="266"/>
    </location>
</feature>
<feature type="transmembrane region" description="Helical" evidence="2">
    <location>
        <begin position="267"/>
        <end position="287"/>
    </location>
</feature>
<feature type="topological domain" description="Lumenal" evidence="2">
    <location>
        <begin position="288"/>
        <end position="362"/>
    </location>
</feature>
<feature type="transmembrane region" description="Helical" evidence="2">
    <location>
        <begin position="363"/>
        <end position="383"/>
    </location>
</feature>
<feature type="topological domain" description="Cytoplasmic" evidence="2">
    <location>
        <begin position="384"/>
        <end position="389"/>
    </location>
</feature>
<feature type="transmembrane region" description="Helical" evidence="2">
    <location>
        <begin position="390"/>
        <end position="410"/>
    </location>
</feature>
<feature type="topological domain" description="Lumenal" evidence="2">
    <location>
        <begin position="411"/>
        <end position="439"/>
    </location>
</feature>
<feature type="transmembrane region" description="Helical" evidence="2">
    <location>
        <begin position="440"/>
        <end position="460"/>
    </location>
</feature>
<feature type="topological domain" description="Cytoplasmic" evidence="2">
    <location>
        <begin position="461"/>
        <end position="463"/>
    </location>
</feature>
<feature type="transmembrane region" description="Helical" evidence="2">
    <location>
        <begin position="464"/>
        <end position="484"/>
    </location>
</feature>
<feature type="topological domain" description="Lumenal" evidence="2">
    <location>
        <begin position="485"/>
        <end position="534"/>
    </location>
</feature>
<feature type="transmembrane region" description="Helical" evidence="2">
    <location>
        <begin position="535"/>
        <end position="555"/>
    </location>
</feature>
<feature type="topological domain" description="Cytoplasmic" evidence="2">
    <location>
        <begin position="556"/>
        <end position="869"/>
    </location>
</feature>
<feature type="modified residue" description="N-acetylserine" evidence="1">
    <location>
        <position position="2"/>
    </location>
</feature>
<comment type="function">
    <text evidence="2">Catalyzes the first step of the methylation pathway of phosphatidylcholine biosynthesis, the SAM-dependent methylation of phosphatidylethanolamine (PE) to phosphatidylmonomethylethanolamine (PMME).</text>
</comment>
<comment type="catalytic activity">
    <reaction evidence="2">
        <text>a 1,2-diacyl-sn-glycero-3-phosphoethanolamine + S-adenosyl-L-methionine = a 1,2-diacyl-sn-glycero-3-phospho-N-methylethanolamine + S-adenosyl-L-homocysteine + H(+)</text>
        <dbReference type="Rhea" id="RHEA:11164"/>
        <dbReference type="ChEBI" id="CHEBI:15378"/>
        <dbReference type="ChEBI" id="CHEBI:57856"/>
        <dbReference type="ChEBI" id="CHEBI:59789"/>
        <dbReference type="ChEBI" id="CHEBI:64573"/>
        <dbReference type="ChEBI" id="CHEBI:64612"/>
        <dbReference type="EC" id="2.1.1.17"/>
    </reaction>
</comment>
<comment type="pathway">
    <text evidence="2">Phospholipid metabolism; phosphatidylcholine biosynthesis.</text>
</comment>
<comment type="subcellular location">
    <subcellularLocation>
        <location evidence="2">Endoplasmic reticulum membrane</location>
        <topology evidence="2">Multi-pass membrane protein</topology>
    </subcellularLocation>
</comment>
<comment type="similarity">
    <text evidence="2">Belongs to the class VI-like SAM-binding methyltransferase superfamily. CHO2 family.</text>
</comment>
<proteinExistence type="inferred from homology"/>
<name>CHO2_YEAS1</name>
<gene>
    <name type="primary">CHO2</name>
    <name type="ORF">SCRG_00863</name>
</gene>
<accession>B3LI73</accession>